<sequence length="310" mass="35268">MKHSYRADEPLWLNYTEAISKTWDIDPTYNAIHGAMKDMGEAKTHRVLAGMALYYHLGFSCQLAEQSTDENFWDVLGNNYEGTKRGTERRYFRGEQGRASLKYIKDNYKTPTDFLLGLHRDKYSDLLKAFGPVPAFGPYFVWKMGDIYDRILGMPIQADNCIEHLPSEPFKGMELVRKEMIARGDASFADYTPQQMFEYMESQTNKLGLIAPPAGDRLLDIREIETAMCGLKHFYTGTDYVGKDLVKHSESLLGYGETADLLRSHMPPVIARDYFMAPASVIKLHGPNRKIDEEGSNPIVKTTGLGSFFR</sequence>
<feature type="chain" id="PRO_0000456275" description="Putrescinyltransferase">
    <location>
        <begin position="1"/>
        <end position="310"/>
    </location>
</feature>
<keyword id="KW-0945">Host-virus interaction</keyword>
<keyword id="KW-1090">Inhibition of host innate immune response by virus</keyword>
<keyword id="KW-1185">Reference proteome</keyword>
<keyword id="KW-1258">Restriction-modification system evasion by virus</keyword>
<keyword id="KW-0808">Transferase</keyword>
<keyword id="KW-0899">Viral immunoevasion</keyword>
<dbReference type="EMBL" id="GQ357915">
    <property type="protein sequence ID" value="ACV50131.1"/>
    <property type="molecule type" value="Genomic_DNA"/>
</dbReference>
<dbReference type="RefSeq" id="YP_003358963.1">
    <property type="nucleotide sequence ID" value="NC_013697.1"/>
</dbReference>
<dbReference type="SMR" id="C9DG80"/>
<dbReference type="GeneID" id="8684057"/>
<dbReference type="KEGG" id="vg:8684057"/>
<dbReference type="OrthoDB" id="4516at10239"/>
<dbReference type="Proteomes" id="UP000008986">
    <property type="component" value="Genome"/>
</dbReference>
<dbReference type="GO" id="GO:0016740">
    <property type="term" value="F:transferase activity"/>
    <property type="evidence" value="ECO:0007669"/>
    <property type="project" value="UniProtKB-KW"/>
</dbReference>
<dbReference type="GO" id="GO:0099018">
    <property type="term" value="P:symbiont-mediated evasion of host restriction-modification system"/>
    <property type="evidence" value="ECO:0007669"/>
    <property type="project" value="UniProtKB-KW"/>
</dbReference>
<dbReference type="GO" id="GO:0052170">
    <property type="term" value="P:symbiont-mediated suppression of host innate immune response"/>
    <property type="evidence" value="ECO:0007669"/>
    <property type="project" value="UniProtKB-KW"/>
</dbReference>
<dbReference type="InterPro" id="IPR040741">
    <property type="entry name" value="ADDT"/>
</dbReference>
<dbReference type="Pfam" id="PF18724">
    <property type="entry name" value="ADDT"/>
    <property type="match status" value="1"/>
</dbReference>
<proteinExistence type="evidence at protein level"/>
<accession>C9DG80</accession>
<comment type="function">
    <text evidence="1 2 3">Transfers putrescine to 5-phosphomethyl-2'-deoxyuridine (5-PmdU) to produce 5-Nalpha-putrescinylthymidine (Nalpha-PutT) as a step in the pathway leading to thymidine hypermodifications in the viral genome (PubMed:34522950, PubMed:7109031, PubMed:7260058). As a final result of the pathway of hypermodification, Nalpha-PutT substitutes for about 50% of thymidines in the viral DNA (PubMed:7260058). These modifications probably prevent degradation of viral genome by the host restriction-modification antiviral defense system (PubMed:34522950).</text>
</comment>
<comment type="catalytic activity">
    <reaction evidence="1">
        <text>5-phosphomethyl-dUMP in DNA + putrescine = 5-N(alpha)-putrescinyl-dTMP in DNA + phosphate</text>
        <dbReference type="Rhea" id="RHEA:71575"/>
        <dbReference type="Rhea" id="RHEA-COMP:18039"/>
        <dbReference type="Rhea" id="RHEA-COMP:18045"/>
        <dbReference type="ChEBI" id="CHEBI:43474"/>
        <dbReference type="ChEBI" id="CHEBI:190918"/>
        <dbReference type="ChEBI" id="CHEBI:190920"/>
        <dbReference type="ChEBI" id="CHEBI:326268"/>
    </reaction>
</comment>
<comment type="miscellaneous">
    <text evidence="2 3">Mutant am37 contains a normal amount of thymine, no alpha-putrescinylthymine, and hydroxymethyluracil (PubMed:7109031, PubMed:7260058). Mutants am36 and am42 contain more thymine and less a-putrescinylthymine than wild-type (PubMed:7109031).</text>
</comment>
<comment type="similarity">
    <text evidence="5">Belongs to the thymidine aminotransferase family.</text>
</comment>
<reference key="1">
    <citation type="submission" date="2009-07" db="EMBL/GenBank/DDBJ databases">
        <authorList>
            <person name="Kropinski A.M."/>
            <person name="Villegas A."/>
            <person name="Lingohr E.J."/>
        </authorList>
    </citation>
    <scope>NUCLEOTIDE SEQUENCE [LARGE SCALE GENOMIC DNA]</scope>
</reference>
<reference key="2">
    <citation type="journal article" date="1981" name="Biochemistry">
        <title>5-[(Hydroxymethyl)-O-pyrophosphoryl]uracil, an intermediate in the biosynthesis of alpha-putrescinylthymine in deoxyribonucleic acid of bacteriophage phi W-14.</title>
        <authorList>
            <person name="Maltman K.L."/>
            <person name="Neuhard J."/>
            <person name="Warren R.A."/>
        </authorList>
    </citation>
    <scope>FUNCTION</scope>
    <source>
        <strain evidence="5">Mutant am37</strain>
    </source>
</reference>
<reference key="3">
    <citation type="journal article" date="1982" name="J. Virol.">
        <title>Isolation and preliminary characterization of amber mutants of bacteriophage phi W-14 defective in DNA synthesis.</title>
        <authorList>
            <person name="Miller P.B."/>
            <person name="Maltman K.L."/>
            <person name="Warren R.A."/>
        </authorList>
    </citation>
    <scope>FUNCTION</scope>
    <source>
        <strain>Mutant am36</strain>
        <strain>Mutant am42</strain>
    </source>
</reference>
<reference key="4">
    <citation type="journal article" date="2021" name="Nucleic Acids Res.">
        <title>Pathways of thymidine hypermodification.</title>
        <authorList>
            <person name="Lee Y.J."/>
            <person name="Dai N."/>
            <person name="Mueller S.I."/>
            <person name="Guan C."/>
            <person name="Parker M.J."/>
            <person name="Fraser M.E."/>
            <person name="Walsh S.E."/>
            <person name="Sridar J."/>
            <person name="Mulholland A."/>
            <person name="Nayak K."/>
            <person name="Sun Z."/>
            <person name="Lin Y.C."/>
            <person name="Comb D.G."/>
            <person name="Marks K."/>
            <person name="Gonzalez R."/>
            <person name="Dowling D.P."/>
            <person name="Bandarian V."/>
            <person name="Saleh L."/>
            <person name="Correa I.R."/>
            <person name="Weigele P.R."/>
        </authorList>
    </citation>
    <scope>FUNCTION</scope>
    <scope>CATALYTIC ACTIVITY</scope>
</reference>
<evidence type="ECO:0000269" key="1">
    <source>
    </source>
</evidence>
<evidence type="ECO:0000269" key="2">
    <source>
    </source>
</evidence>
<evidence type="ECO:0000269" key="3">
    <source>
    </source>
</evidence>
<evidence type="ECO:0000303" key="4">
    <source>
    </source>
</evidence>
<evidence type="ECO:0000305" key="5"/>
<evidence type="ECO:0000312" key="6">
    <source>
        <dbReference type="EMBL" id="ACV50131.1"/>
    </source>
</evidence>
<protein>
    <recommendedName>
        <fullName evidence="5">Putrescinyltransferase</fullName>
    </recommendedName>
    <alternativeName>
        <fullName evidence="4">Amino acid:DNA transferase</fullName>
        <shortName evidence="4">AADT</shortName>
    </alternativeName>
</protein>
<name>PUTDT_BPW14</name>
<organism>
    <name type="scientific">Delftia phage PhiW-14</name>
    <name type="common">Deftia acidovorans bacteriophage phiW-14</name>
    <dbReference type="NCBI Taxonomy" id="665032"/>
    <lineage>
        <taxon>Viruses</taxon>
        <taxon>Duplodnaviria</taxon>
        <taxon>Heunggongvirae</taxon>
        <taxon>Uroviricota</taxon>
        <taxon>Caudoviricetes</taxon>
        <taxon>Ionavirus</taxon>
        <taxon>Ionavirus W14</taxon>
    </lineage>
</organism>
<organismHost>
    <name type="scientific">Delftia acidovorans</name>
    <name type="common">Pseudomonas acidovorans</name>
    <name type="synonym">Comamonas acidovorans</name>
    <dbReference type="NCBI Taxonomy" id="80866"/>
</organismHost>
<gene>
    <name evidence="5" type="primary">gp109</name>
</gene>
<gene>
    <name evidence="6" type="primary">109</name>
</gene>